<protein>
    <recommendedName>
        <fullName evidence="1">Processive diacylglycerol beta-glucosyltransferase</fullName>
        <ecNumber>2.4.1.315</ecNumber>
    </recommendedName>
    <alternativeName>
        <fullName evidence="1">Beta-diglucosyldiacylglycerol synthase</fullName>
        <shortName evidence="1">Beta-DGS</shortName>
        <shortName evidence="1">DGlcDAG synthase</shortName>
        <shortName evidence="1">Glc2-DAG synthase</shortName>
    </alternativeName>
    <alternativeName>
        <fullName evidence="1">Beta-gentiobiosyldiacylglycerol synthase</fullName>
    </alternativeName>
    <alternativeName>
        <fullName evidence="1">Beta-monoglucosyldiacylglycerol synthase</fullName>
        <shortName evidence="1">Beta-MGS</shortName>
        <shortName evidence="1">MGlcDAG synthase</shortName>
    </alternativeName>
    <alternativeName>
        <fullName>Diglucosyl diacylglycerol synthase (1,6-linking)</fullName>
    </alternativeName>
    <alternativeName>
        <fullName evidence="1">Glucosyl-beta-1,6-glucosyldiacylglycerol synthase</fullName>
    </alternativeName>
    <alternativeName>
        <fullName evidence="1">UDP glucosyltransferase</fullName>
    </alternativeName>
    <alternativeName>
        <fullName evidence="1">UDP-glucose:1,2-diacylglycerol-3-beta-D-glucosyltransferase</fullName>
    </alternativeName>
</protein>
<proteinExistence type="inferred from homology"/>
<evidence type="ECO:0000255" key="1">
    <source>
        <dbReference type="HAMAP-Rule" id="MF_01280"/>
    </source>
</evidence>
<gene>
    <name evidence="1" type="primary">ugtP</name>
    <name type="ordered locus">SAHV_1011</name>
</gene>
<reference key="1">
    <citation type="journal article" date="2008" name="Antimicrob. Agents Chemother.">
        <title>Mutated response regulator graR is responsible for phenotypic conversion of Staphylococcus aureus from heterogeneous vancomycin-intermediate resistance to vancomycin-intermediate resistance.</title>
        <authorList>
            <person name="Neoh H.-M."/>
            <person name="Cui L."/>
            <person name="Yuzawa H."/>
            <person name="Takeuchi F."/>
            <person name="Matsuo M."/>
            <person name="Hiramatsu K."/>
        </authorList>
    </citation>
    <scope>NUCLEOTIDE SEQUENCE [LARGE SCALE GENOMIC DNA]</scope>
    <source>
        <strain>Mu3 / ATCC 700698</strain>
    </source>
</reference>
<comment type="function">
    <text evidence="1">Processive glucosyltransferase involved in the biosynthesis of both the bilayer- and non-bilayer-forming membrane glucolipids. Is able to successively transfer two glucosyl residues to diacylglycerol (DAG), thereby catalyzing the formation of beta-monoglucosyl-DAG (3-O-(beta-D-glucopyranosyl)-1,2-diacyl-sn-glycerol) and beta-diglucosyl-DAG (3-O-(beta-D-glucopyranosyl-beta-(1-&gt;6)-D-glucopyranosyl)-1,2-diacyl-sn-glycerol). Beta-diglucosyl-DAG is the predominant glycolipid found in Bacillales and is also used as a membrane anchor for lipoteichoic acid (LTA).</text>
</comment>
<comment type="catalytic activity">
    <reaction>
        <text>a 1,2-diacyl-3-O-(beta-D-glucopyranosyl)-sn-glycerol + UDP-alpha-D-glucose = a 1,2-diacyl-3-O-(beta-D-Glc-(1-&gt;6)-beta-D-Glc)-sn-glycerol + UDP + H(+)</text>
        <dbReference type="Rhea" id="RHEA:39031"/>
        <dbReference type="ChEBI" id="CHEBI:15378"/>
        <dbReference type="ChEBI" id="CHEBI:58223"/>
        <dbReference type="ChEBI" id="CHEBI:58885"/>
        <dbReference type="ChEBI" id="CHEBI:75799"/>
        <dbReference type="ChEBI" id="CHEBI:76264"/>
        <dbReference type="EC" id="2.4.1.315"/>
    </reaction>
</comment>
<comment type="catalytic activity">
    <reaction evidence="1">
        <text>a 1,2-diacyl-sn-glycerol + UDP-alpha-D-glucose = a 1,2-diacyl-3-O-(beta-D-glucopyranosyl)-sn-glycerol + UDP + H(+)</text>
        <dbReference type="Rhea" id="RHEA:17285"/>
        <dbReference type="ChEBI" id="CHEBI:15378"/>
        <dbReference type="ChEBI" id="CHEBI:17815"/>
        <dbReference type="ChEBI" id="CHEBI:58223"/>
        <dbReference type="ChEBI" id="CHEBI:58885"/>
        <dbReference type="ChEBI" id="CHEBI:75799"/>
    </reaction>
</comment>
<comment type="pathway">
    <text evidence="1">Glycolipid metabolism; diglucosyl-diacylglycerol biosynthesis.</text>
</comment>
<comment type="subcellular location">
    <subcellularLocation>
        <location evidence="1">Cell membrane</location>
    </subcellularLocation>
</comment>
<comment type="similarity">
    <text evidence="1">Belongs to the glycosyltransferase 28 family. UgtP subfamily.</text>
</comment>
<sequence length="391" mass="44560">MVTQNKKILIITGSFGNGHMQVTQSIVNQLNDMNLDHLSVIEHDLFMEAHPILTSICKKWYINSFKYFRNMYKGFYYSRPDKLDKCFYKYYGLNKLINLLIKEKPDLILLTFPTPVMSVLTEQFNINIPVATVMTDYRLHKNWITPYSTRYYVATKETKQDFIDVGIDPSTVKVTGIPIDNKFETPINQKQWLIDNNLDPDKQTILMSAGAFGVSKGFDTMITDILAKSANAQVVMICGKSKELKRSLIAKFKSNENVLILGYTKHMNEWMASSQLMITKPGGITITEGFARCIPMIFLNPAPGQELENALYFEEKGFGKIADTPEEAIKIVASLTNGNEQLTNMISTMEQDKIKYATQTICRDLLDLIGHSSQPQEIYGKVPLYARFFVK</sequence>
<feature type="chain" id="PRO_1000067411" description="Processive diacylglycerol beta-glucosyltransferase">
    <location>
        <begin position="1"/>
        <end position="391"/>
    </location>
</feature>
<accession>A7X0P5</accession>
<keyword id="KW-0119">Carbohydrate metabolism</keyword>
<keyword id="KW-1003">Cell membrane</keyword>
<keyword id="KW-0328">Glycosyltransferase</keyword>
<keyword id="KW-0444">Lipid biosynthesis</keyword>
<keyword id="KW-0443">Lipid metabolism</keyword>
<keyword id="KW-0472">Membrane</keyword>
<keyword id="KW-0808">Transferase</keyword>
<dbReference type="EC" id="2.4.1.315"/>
<dbReference type="EMBL" id="AP009324">
    <property type="protein sequence ID" value="BAF77894.1"/>
    <property type="molecule type" value="Genomic_DNA"/>
</dbReference>
<dbReference type="RefSeq" id="WP_000258645.1">
    <property type="nucleotide sequence ID" value="NC_009782.1"/>
</dbReference>
<dbReference type="SMR" id="A7X0P5"/>
<dbReference type="CAZy" id="GT28">
    <property type="family name" value="Glycosyltransferase Family 28"/>
</dbReference>
<dbReference type="KEGG" id="saw:SAHV_1011"/>
<dbReference type="HOGENOM" id="CLU_028367_0_1_9"/>
<dbReference type="UniPathway" id="UPA00894"/>
<dbReference type="GO" id="GO:0005886">
    <property type="term" value="C:plasma membrane"/>
    <property type="evidence" value="ECO:0007669"/>
    <property type="project" value="UniProtKB-SubCell"/>
</dbReference>
<dbReference type="GO" id="GO:0047228">
    <property type="term" value="F:1,2-diacylglycerol 3-glucosyltransferase activity"/>
    <property type="evidence" value="ECO:0007669"/>
    <property type="project" value="UniProtKB-UniRule"/>
</dbReference>
<dbReference type="GO" id="GO:0009246">
    <property type="term" value="P:enterobacterial common antigen biosynthetic process"/>
    <property type="evidence" value="ECO:0007669"/>
    <property type="project" value="UniProtKB-UniPathway"/>
</dbReference>
<dbReference type="GO" id="GO:0009247">
    <property type="term" value="P:glycolipid biosynthetic process"/>
    <property type="evidence" value="ECO:0007669"/>
    <property type="project" value="UniProtKB-UniRule"/>
</dbReference>
<dbReference type="GO" id="GO:0070395">
    <property type="term" value="P:lipoteichoic acid biosynthetic process"/>
    <property type="evidence" value="ECO:0007669"/>
    <property type="project" value="UniProtKB-UniRule"/>
</dbReference>
<dbReference type="CDD" id="cd17507">
    <property type="entry name" value="GT28_Beta-DGS-like"/>
    <property type="match status" value="1"/>
</dbReference>
<dbReference type="Gene3D" id="3.40.50.2000">
    <property type="entry name" value="Glycogen Phosphorylase B"/>
    <property type="match status" value="2"/>
</dbReference>
<dbReference type="HAMAP" id="MF_01280">
    <property type="entry name" value="Diacylglyc_glucosyltr"/>
    <property type="match status" value="1"/>
</dbReference>
<dbReference type="InterPro" id="IPR009695">
    <property type="entry name" value="Diacylglyc_glucosyltr_N"/>
</dbReference>
<dbReference type="InterPro" id="IPR007235">
    <property type="entry name" value="Glyco_trans_28_C"/>
</dbReference>
<dbReference type="InterPro" id="IPR050519">
    <property type="entry name" value="Glycosyltransf_28_UgtP"/>
</dbReference>
<dbReference type="InterPro" id="IPR023589">
    <property type="entry name" value="Pro_diacylglycrl_glcsylTrfase"/>
</dbReference>
<dbReference type="NCBIfam" id="NF010134">
    <property type="entry name" value="PRK13608.1"/>
    <property type="match status" value="1"/>
</dbReference>
<dbReference type="PANTHER" id="PTHR43025">
    <property type="entry name" value="MONOGALACTOSYLDIACYLGLYCEROL SYNTHASE"/>
    <property type="match status" value="1"/>
</dbReference>
<dbReference type="PANTHER" id="PTHR43025:SF3">
    <property type="entry name" value="MONOGALACTOSYLDIACYLGLYCEROL SYNTHASE 1, CHLOROPLASTIC"/>
    <property type="match status" value="1"/>
</dbReference>
<dbReference type="Pfam" id="PF04101">
    <property type="entry name" value="Glyco_tran_28_C"/>
    <property type="match status" value="1"/>
</dbReference>
<dbReference type="Pfam" id="PF06925">
    <property type="entry name" value="MGDG_synth"/>
    <property type="match status" value="1"/>
</dbReference>
<dbReference type="SUPFAM" id="SSF53756">
    <property type="entry name" value="UDP-Glycosyltransferase/glycogen phosphorylase"/>
    <property type="match status" value="1"/>
</dbReference>
<organism>
    <name type="scientific">Staphylococcus aureus (strain Mu3 / ATCC 700698)</name>
    <dbReference type="NCBI Taxonomy" id="418127"/>
    <lineage>
        <taxon>Bacteria</taxon>
        <taxon>Bacillati</taxon>
        <taxon>Bacillota</taxon>
        <taxon>Bacilli</taxon>
        <taxon>Bacillales</taxon>
        <taxon>Staphylococcaceae</taxon>
        <taxon>Staphylococcus</taxon>
    </lineage>
</organism>
<name>UGTP_STAA1</name>